<proteinExistence type="inferred from homology"/>
<feature type="chain" id="PRO_1000197867" description="Sec-independent protein translocase protein TatA">
    <location>
        <begin position="1"/>
        <end position="79"/>
    </location>
</feature>
<feature type="transmembrane region" description="Helical" evidence="1">
    <location>
        <begin position="1"/>
        <end position="21"/>
    </location>
</feature>
<feature type="region of interest" description="Disordered" evidence="2">
    <location>
        <begin position="43"/>
        <end position="79"/>
    </location>
</feature>
<feature type="compositionally biased region" description="Basic and acidic residues" evidence="2">
    <location>
        <begin position="69"/>
        <end position="79"/>
    </location>
</feature>
<organism>
    <name type="scientific">Delftia acidovorans (strain DSM 14801 / SPH-1)</name>
    <dbReference type="NCBI Taxonomy" id="398578"/>
    <lineage>
        <taxon>Bacteria</taxon>
        <taxon>Pseudomonadati</taxon>
        <taxon>Pseudomonadota</taxon>
        <taxon>Betaproteobacteria</taxon>
        <taxon>Burkholderiales</taxon>
        <taxon>Comamonadaceae</taxon>
        <taxon>Delftia</taxon>
    </lineage>
</organism>
<dbReference type="EMBL" id="CP000884">
    <property type="protein sequence ID" value="ABX38183.1"/>
    <property type="molecule type" value="Genomic_DNA"/>
</dbReference>
<dbReference type="RefSeq" id="WP_012207352.1">
    <property type="nucleotide sequence ID" value="NC_010002.1"/>
</dbReference>
<dbReference type="SMR" id="A9BXA7"/>
<dbReference type="STRING" id="398578.Daci_5554"/>
<dbReference type="GeneID" id="24118893"/>
<dbReference type="KEGG" id="dac:Daci_5554"/>
<dbReference type="eggNOG" id="COG1826">
    <property type="taxonomic scope" value="Bacteria"/>
</dbReference>
<dbReference type="HOGENOM" id="CLU_086034_5_1_4"/>
<dbReference type="Proteomes" id="UP000000784">
    <property type="component" value="Chromosome"/>
</dbReference>
<dbReference type="GO" id="GO:0033281">
    <property type="term" value="C:TAT protein transport complex"/>
    <property type="evidence" value="ECO:0007669"/>
    <property type="project" value="UniProtKB-UniRule"/>
</dbReference>
<dbReference type="GO" id="GO:0008320">
    <property type="term" value="F:protein transmembrane transporter activity"/>
    <property type="evidence" value="ECO:0007669"/>
    <property type="project" value="UniProtKB-UniRule"/>
</dbReference>
<dbReference type="GO" id="GO:0043953">
    <property type="term" value="P:protein transport by the Tat complex"/>
    <property type="evidence" value="ECO:0007669"/>
    <property type="project" value="UniProtKB-UniRule"/>
</dbReference>
<dbReference type="Gene3D" id="1.20.5.3310">
    <property type="match status" value="1"/>
</dbReference>
<dbReference type="HAMAP" id="MF_00236">
    <property type="entry name" value="TatA_E"/>
    <property type="match status" value="1"/>
</dbReference>
<dbReference type="InterPro" id="IPR003369">
    <property type="entry name" value="TatA/B/E"/>
</dbReference>
<dbReference type="InterPro" id="IPR006312">
    <property type="entry name" value="TatA/E"/>
</dbReference>
<dbReference type="NCBIfam" id="NF002813">
    <property type="entry name" value="PRK02958.1"/>
    <property type="match status" value="1"/>
</dbReference>
<dbReference type="NCBIfam" id="TIGR01411">
    <property type="entry name" value="tatAE"/>
    <property type="match status" value="1"/>
</dbReference>
<dbReference type="PANTHER" id="PTHR42982">
    <property type="entry name" value="SEC-INDEPENDENT PROTEIN TRANSLOCASE PROTEIN TATA"/>
    <property type="match status" value="1"/>
</dbReference>
<dbReference type="PANTHER" id="PTHR42982:SF1">
    <property type="entry name" value="SEC-INDEPENDENT PROTEIN TRANSLOCASE PROTEIN TATA"/>
    <property type="match status" value="1"/>
</dbReference>
<dbReference type="Pfam" id="PF02416">
    <property type="entry name" value="TatA_B_E"/>
    <property type="match status" value="1"/>
</dbReference>
<keyword id="KW-0997">Cell inner membrane</keyword>
<keyword id="KW-1003">Cell membrane</keyword>
<keyword id="KW-0472">Membrane</keyword>
<keyword id="KW-0653">Protein transport</keyword>
<keyword id="KW-1185">Reference proteome</keyword>
<keyword id="KW-0811">Translocation</keyword>
<keyword id="KW-0812">Transmembrane</keyword>
<keyword id="KW-1133">Transmembrane helix</keyword>
<keyword id="KW-0813">Transport</keyword>
<gene>
    <name evidence="1" type="primary">tatA</name>
    <name type="ordered locus">Daci_5554</name>
</gene>
<accession>A9BXA7</accession>
<reference key="1">
    <citation type="submission" date="2007-11" db="EMBL/GenBank/DDBJ databases">
        <title>Complete sequence of Delftia acidovorans DSM 14801 / SPH-1.</title>
        <authorList>
            <person name="Copeland A."/>
            <person name="Lucas S."/>
            <person name="Lapidus A."/>
            <person name="Barry K."/>
            <person name="Glavina del Rio T."/>
            <person name="Dalin E."/>
            <person name="Tice H."/>
            <person name="Pitluck S."/>
            <person name="Lowry S."/>
            <person name="Clum A."/>
            <person name="Schmutz J."/>
            <person name="Larimer F."/>
            <person name="Land M."/>
            <person name="Hauser L."/>
            <person name="Kyrpides N."/>
            <person name="Kim E."/>
            <person name="Schleheck D."/>
            <person name="Richardson P."/>
        </authorList>
    </citation>
    <scope>NUCLEOTIDE SEQUENCE [LARGE SCALE GENOMIC DNA]</scope>
    <source>
        <strain>DSM 14801 / SPH-1</strain>
    </source>
</reference>
<comment type="function">
    <text evidence="1">Part of the twin-arginine translocation (Tat) system that transports large folded proteins containing a characteristic twin-arginine motif in their signal peptide across membranes. TatA could form the protein-conducting channel of the Tat system.</text>
</comment>
<comment type="subunit">
    <text evidence="1">The Tat system comprises two distinct complexes: a TatABC complex, containing multiple copies of TatA, TatB and TatC subunits, and a separate TatA complex, containing only TatA subunits. Substrates initially bind to the TatABC complex, which probably triggers association of the separate TatA complex to form the active translocon.</text>
</comment>
<comment type="subcellular location">
    <subcellularLocation>
        <location evidence="1">Cell inner membrane</location>
        <topology evidence="1">Single-pass membrane protein</topology>
    </subcellularLocation>
</comment>
<comment type="similarity">
    <text evidence="1">Belongs to the TatA/E family.</text>
</comment>
<evidence type="ECO:0000255" key="1">
    <source>
        <dbReference type="HAMAP-Rule" id="MF_00236"/>
    </source>
</evidence>
<evidence type="ECO:0000256" key="2">
    <source>
        <dbReference type="SAM" id="MobiDB-lite"/>
    </source>
</evidence>
<sequence>MGSFSIWHWLIVLAIVVLVFGTKKLKNIGSDLGGAVKGFKDGVKDGSTSTDTPAAAPGQVAGQTAADKTTIDVEAKQKG</sequence>
<name>TATA_DELAS</name>
<protein>
    <recommendedName>
        <fullName evidence="1">Sec-independent protein translocase protein TatA</fullName>
    </recommendedName>
</protein>